<gene>
    <name evidence="1" type="primary">glyQ</name>
    <name type="ordered locus">YpsIP31758_4131</name>
</gene>
<keyword id="KW-0030">Aminoacyl-tRNA synthetase</keyword>
<keyword id="KW-0067">ATP-binding</keyword>
<keyword id="KW-0963">Cytoplasm</keyword>
<keyword id="KW-0436">Ligase</keyword>
<keyword id="KW-0547">Nucleotide-binding</keyword>
<keyword id="KW-0648">Protein biosynthesis</keyword>
<sequence length="304" mass="34758">MQKFDTKTFQGLILTLQDYWARQGCTIVQPLDMEVGAGTSHPMTCLRAIGPEPIAAAYVQPSRRPTDGRYGENPNRLQHYYQFQVIIKPSPDNIQELYLGSLKELGLDPTIHDIRFVEDNWENPTLGAWGLGWEVWLNGMEVTQFTYFQQVGGLECKPVTGEITYGLERLAMYIQGVDSVYDLIWCDGPLGTTTYGDIYHQNEVEQSTYNFEYADVDFLFSCFEQYEKEAQSLLALETPLPLPAYERILKAGHTFNLLDARKAISVTERQRYILRIRTLTKAVAEAYYASREALGFPMCKKNQN</sequence>
<feature type="chain" id="PRO_1000059058" description="Glycine--tRNA ligase alpha subunit">
    <location>
        <begin position="1"/>
        <end position="304"/>
    </location>
</feature>
<reference key="1">
    <citation type="journal article" date="2007" name="PLoS Genet.">
        <title>The complete genome sequence of Yersinia pseudotuberculosis IP31758, the causative agent of Far East scarlet-like fever.</title>
        <authorList>
            <person name="Eppinger M."/>
            <person name="Rosovitz M.J."/>
            <person name="Fricke W.F."/>
            <person name="Rasko D.A."/>
            <person name="Kokorina G."/>
            <person name="Fayolle C."/>
            <person name="Lindler L.E."/>
            <person name="Carniel E."/>
            <person name="Ravel J."/>
        </authorList>
    </citation>
    <scope>NUCLEOTIDE SEQUENCE [LARGE SCALE GENOMIC DNA]</scope>
    <source>
        <strain>IP 31758</strain>
    </source>
</reference>
<evidence type="ECO:0000255" key="1">
    <source>
        <dbReference type="HAMAP-Rule" id="MF_00254"/>
    </source>
</evidence>
<comment type="catalytic activity">
    <reaction evidence="1">
        <text>tRNA(Gly) + glycine + ATP = glycyl-tRNA(Gly) + AMP + diphosphate</text>
        <dbReference type="Rhea" id="RHEA:16013"/>
        <dbReference type="Rhea" id="RHEA-COMP:9664"/>
        <dbReference type="Rhea" id="RHEA-COMP:9683"/>
        <dbReference type="ChEBI" id="CHEBI:30616"/>
        <dbReference type="ChEBI" id="CHEBI:33019"/>
        <dbReference type="ChEBI" id="CHEBI:57305"/>
        <dbReference type="ChEBI" id="CHEBI:78442"/>
        <dbReference type="ChEBI" id="CHEBI:78522"/>
        <dbReference type="ChEBI" id="CHEBI:456215"/>
        <dbReference type="EC" id="6.1.1.14"/>
    </reaction>
</comment>
<comment type="subunit">
    <text evidence="1">Tetramer of two alpha and two beta subunits.</text>
</comment>
<comment type="subcellular location">
    <subcellularLocation>
        <location evidence="1">Cytoplasm</location>
    </subcellularLocation>
</comment>
<comment type="similarity">
    <text evidence="1">Belongs to the class-II aminoacyl-tRNA synthetase family.</text>
</comment>
<accession>A7FP96</accession>
<dbReference type="EC" id="6.1.1.14" evidence="1"/>
<dbReference type="EMBL" id="CP000720">
    <property type="protein sequence ID" value="ABS48325.1"/>
    <property type="molecule type" value="Genomic_DNA"/>
</dbReference>
<dbReference type="RefSeq" id="WP_002209624.1">
    <property type="nucleotide sequence ID" value="NC_009708.1"/>
</dbReference>
<dbReference type="SMR" id="A7FP96"/>
<dbReference type="GeneID" id="96663419"/>
<dbReference type="KEGG" id="ypi:YpsIP31758_4131"/>
<dbReference type="HOGENOM" id="CLU_057066_1_0_6"/>
<dbReference type="Proteomes" id="UP000002412">
    <property type="component" value="Chromosome"/>
</dbReference>
<dbReference type="GO" id="GO:0005829">
    <property type="term" value="C:cytosol"/>
    <property type="evidence" value="ECO:0007669"/>
    <property type="project" value="TreeGrafter"/>
</dbReference>
<dbReference type="GO" id="GO:0005524">
    <property type="term" value="F:ATP binding"/>
    <property type="evidence" value="ECO:0007669"/>
    <property type="project" value="UniProtKB-UniRule"/>
</dbReference>
<dbReference type="GO" id="GO:0004820">
    <property type="term" value="F:glycine-tRNA ligase activity"/>
    <property type="evidence" value="ECO:0007669"/>
    <property type="project" value="UniProtKB-UniRule"/>
</dbReference>
<dbReference type="GO" id="GO:0006426">
    <property type="term" value="P:glycyl-tRNA aminoacylation"/>
    <property type="evidence" value="ECO:0007669"/>
    <property type="project" value="UniProtKB-UniRule"/>
</dbReference>
<dbReference type="CDD" id="cd00733">
    <property type="entry name" value="GlyRS_alpha_core"/>
    <property type="match status" value="1"/>
</dbReference>
<dbReference type="FunFam" id="1.20.58.180:FF:000001">
    <property type="entry name" value="Glycine--tRNA ligase alpha subunit"/>
    <property type="match status" value="1"/>
</dbReference>
<dbReference type="FunFam" id="3.30.930.10:FF:000006">
    <property type="entry name" value="Glycine--tRNA ligase alpha subunit"/>
    <property type="match status" value="1"/>
</dbReference>
<dbReference type="Gene3D" id="3.30.930.10">
    <property type="entry name" value="Bira Bifunctional Protein, Domain 2"/>
    <property type="match status" value="1"/>
</dbReference>
<dbReference type="Gene3D" id="1.20.58.180">
    <property type="entry name" value="Class II aaRS and biotin synthetases, domain 2"/>
    <property type="match status" value="1"/>
</dbReference>
<dbReference type="HAMAP" id="MF_00254">
    <property type="entry name" value="Gly_tRNA_synth_alpha"/>
    <property type="match status" value="1"/>
</dbReference>
<dbReference type="InterPro" id="IPR045864">
    <property type="entry name" value="aa-tRNA-synth_II/BPL/LPL"/>
</dbReference>
<dbReference type="InterPro" id="IPR006194">
    <property type="entry name" value="Gly-tRNA-synth_heterodimer"/>
</dbReference>
<dbReference type="InterPro" id="IPR002310">
    <property type="entry name" value="Gly-tRNA_ligase_asu"/>
</dbReference>
<dbReference type="NCBIfam" id="TIGR00388">
    <property type="entry name" value="glyQ"/>
    <property type="match status" value="1"/>
</dbReference>
<dbReference type="NCBIfam" id="NF006827">
    <property type="entry name" value="PRK09348.1"/>
    <property type="match status" value="1"/>
</dbReference>
<dbReference type="PANTHER" id="PTHR30075:SF2">
    <property type="entry name" value="GLYCINE--TRNA LIGASE, CHLOROPLASTIC_MITOCHONDRIAL 2"/>
    <property type="match status" value="1"/>
</dbReference>
<dbReference type="PANTHER" id="PTHR30075">
    <property type="entry name" value="GLYCYL-TRNA SYNTHETASE"/>
    <property type="match status" value="1"/>
</dbReference>
<dbReference type="Pfam" id="PF02091">
    <property type="entry name" value="tRNA-synt_2e"/>
    <property type="match status" value="1"/>
</dbReference>
<dbReference type="PRINTS" id="PR01044">
    <property type="entry name" value="TRNASYNTHGA"/>
</dbReference>
<dbReference type="SUPFAM" id="SSF55681">
    <property type="entry name" value="Class II aaRS and biotin synthetases"/>
    <property type="match status" value="1"/>
</dbReference>
<dbReference type="PROSITE" id="PS50861">
    <property type="entry name" value="AA_TRNA_LIGASE_II_GLYAB"/>
    <property type="match status" value="1"/>
</dbReference>
<proteinExistence type="inferred from homology"/>
<protein>
    <recommendedName>
        <fullName evidence="1">Glycine--tRNA ligase alpha subunit</fullName>
        <ecNumber evidence="1">6.1.1.14</ecNumber>
    </recommendedName>
    <alternativeName>
        <fullName evidence="1">Glycyl-tRNA synthetase alpha subunit</fullName>
        <shortName evidence="1">GlyRS</shortName>
    </alternativeName>
</protein>
<organism>
    <name type="scientific">Yersinia pseudotuberculosis serotype O:1b (strain IP 31758)</name>
    <dbReference type="NCBI Taxonomy" id="349747"/>
    <lineage>
        <taxon>Bacteria</taxon>
        <taxon>Pseudomonadati</taxon>
        <taxon>Pseudomonadota</taxon>
        <taxon>Gammaproteobacteria</taxon>
        <taxon>Enterobacterales</taxon>
        <taxon>Yersiniaceae</taxon>
        <taxon>Yersinia</taxon>
    </lineage>
</organism>
<name>SYGA_YERP3</name>